<organism>
    <name type="scientific">Rhodopseudomonas palustris (strain HaA2)</name>
    <dbReference type="NCBI Taxonomy" id="316058"/>
    <lineage>
        <taxon>Bacteria</taxon>
        <taxon>Pseudomonadati</taxon>
        <taxon>Pseudomonadota</taxon>
        <taxon>Alphaproteobacteria</taxon>
        <taxon>Hyphomicrobiales</taxon>
        <taxon>Nitrobacteraceae</taxon>
        <taxon>Rhodopseudomonas</taxon>
    </lineage>
</organism>
<reference key="1">
    <citation type="submission" date="2006-01" db="EMBL/GenBank/DDBJ databases">
        <title>Complete sequence of Rhodopseudomonas palustris HaA2.</title>
        <authorList>
            <consortium name="US DOE Joint Genome Institute"/>
            <person name="Copeland A."/>
            <person name="Lucas S."/>
            <person name="Lapidus A."/>
            <person name="Barry K."/>
            <person name="Detter J.C."/>
            <person name="Glavina T."/>
            <person name="Hammon N."/>
            <person name="Israni S."/>
            <person name="Pitluck S."/>
            <person name="Chain P."/>
            <person name="Malfatti S."/>
            <person name="Shin M."/>
            <person name="Vergez L."/>
            <person name="Schmutz J."/>
            <person name="Larimer F."/>
            <person name="Land M."/>
            <person name="Hauser L."/>
            <person name="Pelletier D.A."/>
            <person name="Kyrpides N."/>
            <person name="Anderson I."/>
            <person name="Oda Y."/>
            <person name="Harwood C.S."/>
            <person name="Richardson P."/>
        </authorList>
    </citation>
    <scope>NUCLEOTIDE SEQUENCE [LARGE SCALE GENOMIC DNA]</scope>
    <source>
        <strain>HaA2</strain>
    </source>
</reference>
<proteinExistence type="inferred from homology"/>
<accession>Q2IYY5</accession>
<gene>
    <name evidence="1" type="primary">ureE</name>
    <name type="ordered locus">RPB_1867</name>
</gene>
<name>UREE_RHOP2</name>
<evidence type="ECO:0000255" key="1">
    <source>
        <dbReference type="HAMAP-Rule" id="MF_00822"/>
    </source>
</evidence>
<evidence type="ECO:0000256" key="2">
    <source>
        <dbReference type="SAM" id="MobiDB-lite"/>
    </source>
</evidence>
<feature type="chain" id="PRO_1000062558" description="Urease accessory protein UreE">
    <location>
        <begin position="1"/>
        <end position="215"/>
    </location>
</feature>
<feature type="region of interest" description="Disordered" evidence="2">
    <location>
        <begin position="134"/>
        <end position="215"/>
    </location>
</feature>
<feature type="compositionally biased region" description="Basic and acidic residues" evidence="2">
    <location>
        <begin position="164"/>
        <end position="206"/>
    </location>
</feature>
<comment type="function">
    <text evidence="1">Involved in urease metallocenter assembly. Binds nickel. Probably functions as a nickel donor during metallocenter assembly.</text>
</comment>
<comment type="subcellular location">
    <subcellularLocation>
        <location evidence="1">Cytoplasm</location>
    </subcellularLocation>
</comment>
<comment type="similarity">
    <text evidence="1">Belongs to the UreE family.</text>
</comment>
<protein>
    <recommendedName>
        <fullName evidence="1">Urease accessory protein UreE</fullName>
    </recommendedName>
</protein>
<sequence>MIRASKVHGQYHWKEPAADTVVLDFDDRHRRRMAMTGTRGLSFLLDLEHATALRGGDALVLDDGRLIEVVAAPEPLLEIRGRDPQHLVRLAWHLGNRHLPTQIMAKALRIRRDHVIADMVRGLGGKAVEIEAPFDPEGGAYAPAHEGAAHHDHGGHEHRHHDHGHHDHADHEHDHKHDHGKHDHAGHDHAHDHHVHDEHCGHDHGHGHSHKHDHK</sequence>
<keyword id="KW-0143">Chaperone</keyword>
<keyword id="KW-0963">Cytoplasm</keyword>
<keyword id="KW-0533">Nickel</keyword>
<keyword id="KW-0996">Nickel insertion</keyword>
<keyword id="KW-1185">Reference proteome</keyword>
<dbReference type="EMBL" id="CP000250">
    <property type="protein sequence ID" value="ABD06575.1"/>
    <property type="molecule type" value="Genomic_DNA"/>
</dbReference>
<dbReference type="RefSeq" id="WP_011440763.1">
    <property type="nucleotide sequence ID" value="NC_007778.1"/>
</dbReference>
<dbReference type="SMR" id="Q2IYY5"/>
<dbReference type="STRING" id="316058.RPB_1867"/>
<dbReference type="KEGG" id="rpb:RPB_1867"/>
<dbReference type="eggNOG" id="COG2371">
    <property type="taxonomic scope" value="Bacteria"/>
</dbReference>
<dbReference type="HOGENOM" id="CLU_093757_1_0_5"/>
<dbReference type="OrthoDB" id="9802215at2"/>
<dbReference type="Proteomes" id="UP000008809">
    <property type="component" value="Chromosome"/>
</dbReference>
<dbReference type="GO" id="GO:0005737">
    <property type="term" value="C:cytoplasm"/>
    <property type="evidence" value="ECO:0007669"/>
    <property type="project" value="UniProtKB-SubCell"/>
</dbReference>
<dbReference type="GO" id="GO:0016151">
    <property type="term" value="F:nickel cation binding"/>
    <property type="evidence" value="ECO:0007669"/>
    <property type="project" value="UniProtKB-UniRule"/>
</dbReference>
<dbReference type="GO" id="GO:0051082">
    <property type="term" value="F:unfolded protein binding"/>
    <property type="evidence" value="ECO:0007669"/>
    <property type="project" value="UniProtKB-UniRule"/>
</dbReference>
<dbReference type="GO" id="GO:0006457">
    <property type="term" value="P:protein folding"/>
    <property type="evidence" value="ECO:0007669"/>
    <property type="project" value="InterPro"/>
</dbReference>
<dbReference type="GO" id="GO:0065003">
    <property type="term" value="P:protein-containing complex assembly"/>
    <property type="evidence" value="ECO:0007669"/>
    <property type="project" value="InterPro"/>
</dbReference>
<dbReference type="GO" id="GO:0019627">
    <property type="term" value="P:urea metabolic process"/>
    <property type="evidence" value="ECO:0007669"/>
    <property type="project" value="InterPro"/>
</dbReference>
<dbReference type="CDD" id="cd00571">
    <property type="entry name" value="UreE"/>
    <property type="match status" value="1"/>
</dbReference>
<dbReference type="Gene3D" id="2.60.260.20">
    <property type="entry name" value="Urease metallochaperone UreE, N-terminal domain"/>
    <property type="match status" value="1"/>
</dbReference>
<dbReference type="Gene3D" id="3.30.70.790">
    <property type="entry name" value="UreE, C-terminal domain"/>
    <property type="match status" value="1"/>
</dbReference>
<dbReference type="HAMAP" id="MF_00822">
    <property type="entry name" value="UreE"/>
    <property type="match status" value="1"/>
</dbReference>
<dbReference type="InterPro" id="IPR012406">
    <property type="entry name" value="UreE"/>
</dbReference>
<dbReference type="InterPro" id="IPR007864">
    <property type="entry name" value="UreE_C_dom"/>
</dbReference>
<dbReference type="InterPro" id="IPR004029">
    <property type="entry name" value="UreE_N"/>
</dbReference>
<dbReference type="InterPro" id="IPR036118">
    <property type="entry name" value="UreE_N_sf"/>
</dbReference>
<dbReference type="Pfam" id="PF05194">
    <property type="entry name" value="UreE_C"/>
    <property type="match status" value="1"/>
</dbReference>
<dbReference type="Pfam" id="PF02814">
    <property type="entry name" value="UreE_N"/>
    <property type="match status" value="1"/>
</dbReference>
<dbReference type="SMART" id="SM00988">
    <property type="entry name" value="UreE_N"/>
    <property type="match status" value="1"/>
</dbReference>
<dbReference type="SUPFAM" id="SSF69737">
    <property type="entry name" value="Urease metallochaperone UreE, C-terminal domain"/>
    <property type="match status" value="1"/>
</dbReference>
<dbReference type="SUPFAM" id="SSF69287">
    <property type="entry name" value="Urease metallochaperone UreE, N-terminal domain"/>
    <property type="match status" value="1"/>
</dbReference>